<reference key="1">
    <citation type="journal article" date="2005" name="J. Bacteriol.">
        <title>Whole-genome sequence analysis of Pseudomonas syringae pv. phaseolicola 1448A reveals divergence among pathovars in genes involved in virulence and transposition.</title>
        <authorList>
            <person name="Joardar V."/>
            <person name="Lindeberg M."/>
            <person name="Jackson R.W."/>
            <person name="Selengut J."/>
            <person name="Dodson R."/>
            <person name="Brinkac L.M."/>
            <person name="Daugherty S.C."/>
            <person name="DeBoy R.T."/>
            <person name="Durkin A.S."/>
            <person name="Gwinn Giglio M."/>
            <person name="Madupu R."/>
            <person name="Nelson W.C."/>
            <person name="Rosovitz M.J."/>
            <person name="Sullivan S.A."/>
            <person name="Crabtree J."/>
            <person name="Creasy T."/>
            <person name="Davidsen T.M."/>
            <person name="Haft D.H."/>
            <person name="Zafar N."/>
            <person name="Zhou L."/>
            <person name="Halpin R."/>
            <person name="Holley T."/>
            <person name="Khouri H.M."/>
            <person name="Feldblyum T.V."/>
            <person name="White O."/>
            <person name="Fraser C.M."/>
            <person name="Chatterjee A.K."/>
            <person name="Cartinhour S."/>
            <person name="Schneider D."/>
            <person name="Mansfield J.W."/>
            <person name="Collmer A."/>
            <person name="Buell R."/>
        </authorList>
    </citation>
    <scope>NUCLEOTIDE SEQUENCE [LARGE SCALE GENOMIC DNA]</scope>
    <source>
        <strain>1448A / Race 6</strain>
    </source>
</reference>
<gene>
    <name evidence="1" type="primary">coq7</name>
    <name type="ordered locus">PSPPH_0679</name>
</gene>
<evidence type="ECO:0000255" key="1">
    <source>
        <dbReference type="HAMAP-Rule" id="MF_01658"/>
    </source>
</evidence>
<comment type="function">
    <text evidence="1">Catalyzes the hydroxylation of 2-nonaprenyl-3-methyl-6-methoxy-1,4-benzoquinol during ubiquinone biosynthesis.</text>
</comment>
<comment type="catalytic activity">
    <reaction evidence="1">
        <text>a 5-methoxy-2-methyl-3-(all-trans-polyprenyl)benzene-1,4-diol + AH2 + O2 = a 3-demethylubiquinol + A + H2O</text>
        <dbReference type="Rhea" id="RHEA:50908"/>
        <dbReference type="Rhea" id="RHEA-COMP:10859"/>
        <dbReference type="Rhea" id="RHEA-COMP:10914"/>
        <dbReference type="ChEBI" id="CHEBI:13193"/>
        <dbReference type="ChEBI" id="CHEBI:15377"/>
        <dbReference type="ChEBI" id="CHEBI:15379"/>
        <dbReference type="ChEBI" id="CHEBI:17499"/>
        <dbReference type="ChEBI" id="CHEBI:84167"/>
        <dbReference type="ChEBI" id="CHEBI:84422"/>
        <dbReference type="EC" id="1.14.99.60"/>
    </reaction>
</comment>
<comment type="cofactor">
    <cofactor evidence="1">
        <name>Fe cation</name>
        <dbReference type="ChEBI" id="CHEBI:24875"/>
    </cofactor>
    <text evidence="1">Binds 2 iron ions per subunit.</text>
</comment>
<comment type="pathway">
    <text evidence="1">Cofactor biosynthesis; ubiquinone biosynthesis.</text>
</comment>
<comment type="subcellular location">
    <subcellularLocation>
        <location evidence="1">Cell membrane</location>
        <topology evidence="1">Peripheral membrane protein</topology>
    </subcellularLocation>
</comment>
<comment type="similarity">
    <text evidence="1">Belongs to the COQ7 family.</text>
</comment>
<name>COQ7_PSE14</name>
<dbReference type="EC" id="1.14.99.60" evidence="1"/>
<dbReference type="EMBL" id="CP000058">
    <property type="protein sequence ID" value="AAZ36059.1"/>
    <property type="molecule type" value="Genomic_DNA"/>
</dbReference>
<dbReference type="RefSeq" id="WP_004660761.1">
    <property type="nucleotide sequence ID" value="NC_005773.3"/>
</dbReference>
<dbReference type="SMR" id="Q48NP2"/>
<dbReference type="GeneID" id="61872156"/>
<dbReference type="KEGG" id="psp:PSPPH_0679"/>
<dbReference type="eggNOG" id="COG2941">
    <property type="taxonomic scope" value="Bacteria"/>
</dbReference>
<dbReference type="HOGENOM" id="CLU_088601_0_0_6"/>
<dbReference type="UniPathway" id="UPA00232"/>
<dbReference type="Proteomes" id="UP000000551">
    <property type="component" value="Chromosome"/>
</dbReference>
<dbReference type="GO" id="GO:0005886">
    <property type="term" value="C:plasma membrane"/>
    <property type="evidence" value="ECO:0007669"/>
    <property type="project" value="UniProtKB-SubCell"/>
</dbReference>
<dbReference type="GO" id="GO:0008682">
    <property type="term" value="F:3-demethoxyubiquinol 3-hydroxylase activity"/>
    <property type="evidence" value="ECO:0007669"/>
    <property type="project" value="UniProtKB-EC"/>
</dbReference>
<dbReference type="GO" id="GO:0046872">
    <property type="term" value="F:metal ion binding"/>
    <property type="evidence" value="ECO:0007669"/>
    <property type="project" value="UniProtKB-KW"/>
</dbReference>
<dbReference type="GO" id="GO:0006744">
    <property type="term" value="P:ubiquinone biosynthetic process"/>
    <property type="evidence" value="ECO:0007669"/>
    <property type="project" value="UniProtKB-UniRule"/>
</dbReference>
<dbReference type="CDD" id="cd01042">
    <property type="entry name" value="DMQH"/>
    <property type="match status" value="1"/>
</dbReference>
<dbReference type="Gene3D" id="1.20.1260.10">
    <property type="match status" value="1"/>
</dbReference>
<dbReference type="HAMAP" id="MF_01658">
    <property type="entry name" value="COQ7"/>
    <property type="match status" value="1"/>
</dbReference>
<dbReference type="InterPro" id="IPR047809">
    <property type="entry name" value="COQ7_proteobact"/>
</dbReference>
<dbReference type="InterPro" id="IPR012347">
    <property type="entry name" value="Ferritin-like"/>
</dbReference>
<dbReference type="InterPro" id="IPR009078">
    <property type="entry name" value="Ferritin-like_SF"/>
</dbReference>
<dbReference type="InterPro" id="IPR011566">
    <property type="entry name" value="Ubq_synth_Coq7"/>
</dbReference>
<dbReference type="NCBIfam" id="NF033656">
    <property type="entry name" value="DMQ_monoox_COQ7"/>
    <property type="match status" value="1"/>
</dbReference>
<dbReference type="PANTHER" id="PTHR11237:SF4">
    <property type="entry name" value="5-DEMETHOXYUBIQUINONE HYDROXYLASE, MITOCHONDRIAL"/>
    <property type="match status" value="1"/>
</dbReference>
<dbReference type="PANTHER" id="PTHR11237">
    <property type="entry name" value="COENZYME Q10 BIOSYNTHESIS PROTEIN 7"/>
    <property type="match status" value="1"/>
</dbReference>
<dbReference type="Pfam" id="PF03232">
    <property type="entry name" value="COQ7"/>
    <property type="match status" value="1"/>
</dbReference>
<dbReference type="SUPFAM" id="SSF47240">
    <property type="entry name" value="Ferritin-like"/>
    <property type="match status" value="1"/>
</dbReference>
<feature type="chain" id="PRO_0000338719" description="3-demethoxyubiquinol 3-hydroxylase">
    <location>
        <begin position="1"/>
        <end position="215"/>
    </location>
</feature>
<feature type="binding site" evidence="1">
    <location>
        <position position="64"/>
    </location>
    <ligand>
        <name>Fe cation</name>
        <dbReference type="ChEBI" id="CHEBI:24875"/>
        <label>1</label>
    </ligand>
</feature>
<feature type="binding site" evidence="1">
    <location>
        <position position="94"/>
    </location>
    <ligand>
        <name>Fe cation</name>
        <dbReference type="ChEBI" id="CHEBI:24875"/>
        <label>1</label>
    </ligand>
</feature>
<feature type="binding site" evidence="1">
    <location>
        <position position="94"/>
    </location>
    <ligand>
        <name>Fe cation</name>
        <dbReference type="ChEBI" id="CHEBI:24875"/>
        <label>2</label>
    </ligand>
</feature>
<feature type="binding site" evidence="1">
    <location>
        <position position="97"/>
    </location>
    <ligand>
        <name>Fe cation</name>
        <dbReference type="ChEBI" id="CHEBI:24875"/>
        <label>1</label>
    </ligand>
</feature>
<feature type="binding site" evidence="1">
    <location>
        <position position="146"/>
    </location>
    <ligand>
        <name>Fe cation</name>
        <dbReference type="ChEBI" id="CHEBI:24875"/>
        <label>2</label>
    </ligand>
</feature>
<feature type="binding site" evidence="1">
    <location>
        <position position="178"/>
    </location>
    <ligand>
        <name>Fe cation</name>
        <dbReference type="ChEBI" id="CHEBI:24875"/>
        <label>1</label>
    </ligand>
</feature>
<feature type="binding site" evidence="1">
    <location>
        <position position="178"/>
    </location>
    <ligand>
        <name>Fe cation</name>
        <dbReference type="ChEBI" id="CHEBI:24875"/>
        <label>2</label>
    </ligand>
</feature>
<feature type="binding site" evidence="1">
    <location>
        <position position="181"/>
    </location>
    <ligand>
        <name>Fe cation</name>
        <dbReference type="ChEBI" id="CHEBI:24875"/>
        <label>2</label>
    </ligand>
</feature>
<organism>
    <name type="scientific">Pseudomonas savastanoi pv. phaseolicola (strain 1448A / Race 6)</name>
    <name type="common">Pseudomonas syringae pv. phaseolicola (strain 1448A / Race 6)</name>
    <dbReference type="NCBI Taxonomy" id="264730"/>
    <lineage>
        <taxon>Bacteria</taxon>
        <taxon>Pseudomonadati</taxon>
        <taxon>Pseudomonadota</taxon>
        <taxon>Gammaproteobacteria</taxon>
        <taxon>Pseudomonadales</taxon>
        <taxon>Pseudomonadaceae</taxon>
        <taxon>Pseudomonas</taxon>
    </lineage>
</organism>
<sequence>MATERHYSPLDRLLLQADSAMRTLLPLSAHPQRPSPAVVQPDHKMSDVDTRHVAGLMRINHTGEVCAQALYQGQALTAKLPKVRKAMEHAAEEEIDHLVWCEQRIHQLGSHTSVLNPLFYGLSFGIGAVAGVISDRVSLGFVAATEDQVCKHLSEHLEQLPSEDGKSRAILEQMLNDEEHHAESALEAGGFRFPAPVKFGMSILAKVMTKSTYRI</sequence>
<keyword id="KW-1003">Cell membrane</keyword>
<keyword id="KW-0408">Iron</keyword>
<keyword id="KW-0472">Membrane</keyword>
<keyword id="KW-0479">Metal-binding</keyword>
<keyword id="KW-0503">Monooxygenase</keyword>
<keyword id="KW-0560">Oxidoreductase</keyword>
<keyword id="KW-0831">Ubiquinone biosynthesis</keyword>
<proteinExistence type="inferred from homology"/>
<accession>Q48NP2</accession>
<protein>
    <recommendedName>
        <fullName evidence="1">3-demethoxyubiquinol 3-hydroxylase</fullName>
        <shortName evidence="1">DMQ hydroxylase</shortName>
        <ecNumber evidence="1">1.14.99.60</ecNumber>
    </recommendedName>
    <alternativeName>
        <fullName evidence="1">2-nonaprenyl-3-methyl-6-methoxy-1,4-benzoquinol hydroxylase</fullName>
    </alternativeName>
</protein>